<proteinExistence type="inferred from homology"/>
<keyword id="KW-0066">ATP synthesis</keyword>
<keyword id="KW-0138">CF(0)</keyword>
<keyword id="KW-0375">Hydrogen ion transport</keyword>
<keyword id="KW-0406">Ion transport</keyword>
<keyword id="KW-0472">Membrane</keyword>
<keyword id="KW-0496">Mitochondrion</keyword>
<keyword id="KW-1185">Reference proteome</keyword>
<keyword id="KW-0812">Transmembrane</keyword>
<keyword id="KW-1133">Transmembrane helix</keyword>
<keyword id="KW-0813">Transport</keyword>
<accession>P14093</accession>
<protein>
    <recommendedName>
        <fullName evidence="1">ATP synthase F(0) complex subunit 8</fullName>
    </recommendedName>
    <alternativeName>
        <fullName>A6L</fullName>
    </alternativeName>
    <alternativeName>
        <fullName>F-ATPase subunit 8</fullName>
    </alternativeName>
</protein>
<name>ATP8_CHICK</name>
<organism>
    <name type="scientific">Gallus gallus</name>
    <name type="common">Chicken</name>
    <dbReference type="NCBI Taxonomy" id="9031"/>
    <lineage>
        <taxon>Eukaryota</taxon>
        <taxon>Metazoa</taxon>
        <taxon>Chordata</taxon>
        <taxon>Craniata</taxon>
        <taxon>Vertebrata</taxon>
        <taxon>Euteleostomi</taxon>
        <taxon>Archelosauria</taxon>
        <taxon>Archosauria</taxon>
        <taxon>Dinosauria</taxon>
        <taxon>Saurischia</taxon>
        <taxon>Theropoda</taxon>
        <taxon>Coelurosauria</taxon>
        <taxon>Aves</taxon>
        <taxon>Neognathae</taxon>
        <taxon>Galloanserae</taxon>
        <taxon>Galliformes</taxon>
        <taxon>Phasianidae</taxon>
        <taxon>Phasianinae</taxon>
        <taxon>Gallus</taxon>
    </lineage>
</organism>
<gene>
    <name evidence="1" type="primary">MT-ATP8</name>
    <name type="synonym">ATP8</name>
    <name type="synonym">ATPASE8</name>
    <name type="synonym">MTATP8</name>
</gene>
<sequence length="54" mass="6377">MPQLNPNPWFSIMLLTWFTFSLLIQPKLLSFTLTNNPANKITTTKPTPWTWPWT</sequence>
<geneLocation type="mitochondrion"/>
<reference key="1">
    <citation type="journal article" date="1989" name="J. Mol. Biol.">
        <title>Putative chicken 'muscle-specific 7 S RNA' is related to the mitochondrial ATPase 6 gene.</title>
        <authorList>
            <person name="Desjardins P."/>
            <person name="L'Abbe D."/>
            <person name="Lang B.F."/>
            <person name="Morais R."/>
        </authorList>
    </citation>
    <scope>NUCLEOTIDE SEQUENCE [GENOMIC DNA]</scope>
</reference>
<reference key="2">
    <citation type="journal article" date="1990" name="J. Mol. Biol.">
        <title>Sequence and gene organization of the chicken mitochondrial genome. A novel gene order in higher vertebrates.</title>
        <authorList>
            <person name="Desjardins P."/>
            <person name="Morais R."/>
        </authorList>
    </citation>
    <scope>NUCLEOTIDE SEQUENCE [GENOMIC DNA]</scope>
    <source>
        <strain evidence="5">Red jungle fowl</strain>
    </source>
</reference>
<evidence type="ECO:0000250" key="1">
    <source>
        <dbReference type="UniProtKB" id="P03928"/>
    </source>
</evidence>
<evidence type="ECO:0000250" key="2">
    <source>
        <dbReference type="UniProtKB" id="P19483"/>
    </source>
</evidence>
<evidence type="ECO:0000255" key="3"/>
<evidence type="ECO:0000305" key="4"/>
<evidence type="ECO:0000312" key="5">
    <source>
        <dbReference type="Proteomes" id="UP000000539"/>
    </source>
</evidence>
<comment type="function">
    <text evidence="1 2">Subunit 8, of the mitochondrial membrane ATP synthase complex (F(1)F(0) ATP synthase or Complex V) that produces ATP from ADP in the presence of a proton gradient across the membrane which is generated by electron transport complexes of the respiratory chain. ATP synthase complex consist of a soluble F(1) head domain - the catalytic core - and a membrane F(1) domain - the membrane proton channel. These two domains are linked by a central stalk rotating inside the F(1) region and a stationary peripheral stalk. During catalysis, ATP synthesis in the catalytic domain of F(1) is coupled via a rotary mechanism of the central stalk subunits to proton translocation (By similarity). In vivo, can only synthesize ATP although its ATP hydrolase activity can be activated artificially in vitro (By similarity). Part of the complex F(0) domain (By similarity).</text>
</comment>
<comment type="subunit">
    <text evidence="1">Component of the ATP synthase complex composed at least of ATP5F1A/subunit alpha, ATP5F1B/subunit beta, ATP5MC1/subunit c (homooctomer), MT-ATP6/subunit a, MT-ATP8/subunit 8, ATP5ME/subunit e, ATP5MF/subunit f, ATP5MG/subunit g, ATP5MK/subunit k, ATP5MJ/subunit j, ATP5F1C/subunit gamma, ATP5F1D/subunit delta, ATP5F1E/subunit epsilon, ATP5PF/subunit F6, ATP5PB/subunit b, ATP5PD/subunit d, ATP5PO/subunit OSCP. ATP synthase complex consists of a soluble F(1) head domain (subunits alpha(3) and beta(3)) - the catalytic core - and a membrane F(0) domain - the membrane proton channel (subunits c, a, 8, e, f, g, k and j). These two domains are linked by a central stalk (subunits gamma, delta, and epsilon) rotating inside the F1 region and a stationary peripheral stalk (subunits F6, b, d, and OSCP).</text>
</comment>
<comment type="subcellular location">
    <subcellularLocation>
        <location>Mitochondrion membrane</location>
        <topology>Single-pass membrane protein</topology>
    </subcellularLocation>
</comment>
<comment type="similarity">
    <text evidence="4">Belongs to the ATPase protein 8 family.</text>
</comment>
<dbReference type="EMBL" id="X15841">
    <property type="protein sequence ID" value="CAA33841.1"/>
    <property type="molecule type" value="Genomic_DNA"/>
</dbReference>
<dbReference type="EMBL" id="X52392">
    <property type="protein sequence ID" value="CAA36629.1"/>
    <property type="molecule type" value="Genomic_DNA"/>
</dbReference>
<dbReference type="PIR" id="S04619">
    <property type="entry name" value="S04619"/>
</dbReference>
<dbReference type="RefSeq" id="NP_006919.1">
    <property type="nucleotide sequence ID" value="NC_001323.1"/>
</dbReference>
<dbReference type="SMR" id="P14093"/>
<dbReference type="STRING" id="9031.ENSGALP00000055032"/>
<dbReference type="PaxDb" id="9031-ENSGALP00000034616"/>
<dbReference type="Ensembl" id="ENSGALT00010000022.1">
    <property type="protein sequence ID" value="ENSGALP00010000006.1"/>
    <property type="gene ID" value="ENSGALG00010000022.1"/>
</dbReference>
<dbReference type="VEuPathDB" id="HostDB:geneid_63549490"/>
<dbReference type="eggNOG" id="ENOG502TDJG">
    <property type="taxonomic scope" value="Eukaryota"/>
</dbReference>
<dbReference type="GeneTree" id="ENSGT01130000282245"/>
<dbReference type="HOGENOM" id="CLU_212888_0_0_1"/>
<dbReference type="InParanoid" id="P14093"/>
<dbReference type="OMA" id="MPQLNPN"/>
<dbReference type="OrthoDB" id="8734014at2759"/>
<dbReference type="PhylomeDB" id="P14093"/>
<dbReference type="PRO" id="PR:P14093"/>
<dbReference type="Proteomes" id="UP000000539">
    <property type="component" value="Mitochondrion MT"/>
</dbReference>
<dbReference type="Bgee" id="ENSGALG00000032465">
    <property type="expression patterns" value="Expressed in granulocyte and 13 other cell types or tissues"/>
</dbReference>
<dbReference type="GO" id="GO:0031966">
    <property type="term" value="C:mitochondrial membrane"/>
    <property type="evidence" value="ECO:0007669"/>
    <property type="project" value="UniProtKB-SubCell"/>
</dbReference>
<dbReference type="GO" id="GO:0045259">
    <property type="term" value="C:proton-transporting ATP synthase complex"/>
    <property type="evidence" value="ECO:0007669"/>
    <property type="project" value="UniProtKB-KW"/>
</dbReference>
<dbReference type="GO" id="GO:0015078">
    <property type="term" value="F:proton transmembrane transporter activity"/>
    <property type="evidence" value="ECO:0007669"/>
    <property type="project" value="InterPro"/>
</dbReference>
<dbReference type="GO" id="GO:0015986">
    <property type="term" value="P:proton motive force-driven ATP synthesis"/>
    <property type="evidence" value="ECO:0007669"/>
    <property type="project" value="InterPro"/>
</dbReference>
<dbReference type="InterPro" id="IPR001421">
    <property type="entry name" value="ATP8_metazoa"/>
</dbReference>
<dbReference type="InterPro" id="IPR050635">
    <property type="entry name" value="ATPase_protein_8"/>
</dbReference>
<dbReference type="PANTHER" id="PTHR39937">
    <property type="entry name" value="ATP SYNTHASE PROTEIN 8"/>
    <property type="match status" value="1"/>
</dbReference>
<dbReference type="PANTHER" id="PTHR39937:SF1">
    <property type="entry name" value="ATP SYNTHASE PROTEIN 8"/>
    <property type="match status" value="1"/>
</dbReference>
<dbReference type="Pfam" id="PF00895">
    <property type="entry name" value="ATP-synt_8"/>
    <property type="match status" value="1"/>
</dbReference>
<feature type="chain" id="PRO_0000195509" description="ATP synthase F(0) complex subunit 8">
    <location>
        <begin position="1"/>
        <end position="54"/>
    </location>
</feature>
<feature type="transmembrane region" description="Helical" evidence="3">
    <location>
        <begin position="8"/>
        <end position="24"/>
    </location>
</feature>